<feature type="signal peptide" evidence="3">
    <location>
        <begin position="1"/>
        <end position="22"/>
    </location>
</feature>
<feature type="chain" id="PRO_5000146732" description="Retinol-binding protein 3">
    <location>
        <begin position="23"/>
        <end position="1219"/>
    </location>
</feature>
<feature type="repeat" description="1">
    <location>
        <begin position="127"/>
        <end position="301"/>
    </location>
</feature>
<feature type="repeat" description="2">
    <location>
        <begin position="423"/>
        <end position="598"/>
    </location>
</feature>
<feature type="repeat" description="3">
    <location>
        <begin position="721"/>
        <end position="897"/>
    </location>
</feature>
<feature type="repeat" description="4">
    <location>
        <begin position="1022"/>
        <end position="1198"/>
    </location>
</feature>
<feature type="region of interest" description="4 X approximate tandem repeats">
    <location>
        <begin position="127"/>
        <end position="1198"/>
    </location>
</feature>
<feature type="glycosylation site" description="N-linked (GlcNAc...) asparagine" evidence="1">
    <location>
        <position position="94"/>
    </location>
</feature>
<feature type="glycosylation site" description="N-linked (GlcNAc...) asparagine" evidence="1">
    <location>
        <position position="116"/>
    </location>
</feature>
<feature type="glycosylation site" description="N-linked (GlcNAc...) asparagine" evidence="1">
    <location>
        <position position="201"/>
    </location>
</feature>
<feature type="glycosylation site" description="N-linked (GlcNAc...) asparagine" evidence="1">
    <location>
        <position position="499"/>
    </location>
</feature>
<feature type="helix" evidence="8">
    <location>
        <begin position="319"/>
        <end position="334"/>
    </location>
</feature>
<feature type="helix" evidence="8">
    <location>
        <begin position="338"/>
        <end position="340"/>
    </location>
</feature>
<feature type="helix" evidence="8">
    <location>
        <begin position="341"/>
        <end position="347"/>
    </location>
</feature>
<feature type="helix" evidence="8">
    <location>
        <begin position="348"/>
        <end position="350"/>
    </location>
</feature>
<feature type="helix" evidence="8">
    <location>
        <begin position="359"/>
        <end position="374"/>
    </location>
</feature>
<feature type="strand" evidence="8">
    <location>
        <begin position="380"/>
        <end position="383"/>
    </location>
</feature>
<feature type="helix" evidence="8">
    <location>
        <begin position="384"/>
        <end position="386"/>
    </location>
</feature>
<feature type="helix" evidence="8">
    <location>
        <begin position="397"/>
        <end position="399"/>
    </location>
</feature>
<feature type="helix" evidence="8">
    <location>
        <begin position="404"/>
        <end position="414"/>
    </location>
</feature>
<feature type="strand" evidence="8">
    <location>
        <begin position="416"/>
        <end position="420"/>
    </location>
</feature>
<feature type="turn" evidence="8">
    <location>
        <begin position="421"/>
        <end position="423"/>
    </location>
</feature>
<feature type="strand" evidence="8">
    <location>
        <begin position="424"/>
        <end position="428"/>
    </location>
</feature>
<feature type="helix" evidence="8">
    <location>
        <begin position="435"/>
        <end position="448"/>
    </location>
</feature>
<feature type="helix" evidence="8">
    <location>
        <begin position="450"/>
        <end position="453"/>
    </location>
</feature>
<feature type="strand" evidence="8">
    <location>
        <begin position="457"/>
        <end position="462"/>
    </location>
</feature>
<feature type="helix" evidence="8">
    <location>
        <begin position="474"/>
        <end position="479"/>
    </location>
</feature>
<feature type="strand" evidence="8">
    <location>
        <begin position="489"/>
        <end position="495"/>
    </location>
</feature>
<feature type="turn" evidence="8">
    <location>
        <begin position="496"/>
        <end position="499"/>
    </location>
</feature>
<feature type="strand" evidence="8">
    <location>
        <begin position="502"/>
        <end position="505"/>
    </location>
</feature>
<feature type="strand" evidence="8">
    <location>
        <begin position="517"/>
        <end position="525"/>
    </location>
</feature>
<feature type="helix" evidence="8">
    <location>
        <begin position="532"/>
        <end position="542"/>
    </location>
</feature>
<feature type="strand" evidence="8">
    <location>
        <begin position="547"/>
        <end position="551"/>
    </location>
</feature>
<feature type="strand" evidence="8">
    <location>
        <begin position="560"/>
        <end position="564"/>
    </location>
</feature>
<feature type="strand" evidence="8">
    <location>
        <begin position="568"/>
        <end position="575"/>
    </location>
</feature>
<feature type="strand" evidence="8">
    <location>
        <begin position="577"/>
        <end position="581"/>
    </location>
</feature>
<feature type="strand" evidence="8">
    <location>
        <begin position="595"/>
        <end position="597"/>
    </location>
</feature>
<feature type="helix" evidence="8">
    <location>
        <begin position="600"/>
        <end position="602"/>
    </location>
</feature>
<feature type="helix" evidence="8">
    <location>
        <begin position="603"/>
        <end position="612"/>
    </location>
</feature>
<accession>Q7SZI7</accession>
<accession>A0JMY0</accession>
<accession>B2GTX9</accession>
<accession>Q08107</accession>
<accession>Q3B8C0</accession>
<accession>Q56A62</accession>
<organism>
    <name type="scientific">Xenopus laevis</name>
    <name type="common">African clawed frog</name>
    <dbReference type="NCBI Taxonomy" id="8355"/>
    <lineage>
        <taxon>Eukaryota</taxon>
        <taxon>Metazoa</taxon>
        <taxon>Chordata</taxon>
        <taxon>Craniata</taxon>
        <taxon>Vertebrata</taxon>
        <taxon>Euteleostomi</taxon>
        <taxon>Amphibia</taxon>
        <taxon>Batrachia</taxon>
        <taxon>Anura</taxon>
        <taxon>Pipoidea</taxon>
        <taxon>Pipidae</taxon>
        <taxon>Xenopodinae</taxon>
        <taxon>Xenopus</taxon>
        <taxon>Xenopus</taxon>
    </lineage>
</organism>
<keyword id="KW-0002">3D-structure</keyword>
<keyword id="KW-0963">Cytoplasm</keyword>
<keyword id="KW-0903">Direct protein sequencing</keyword>
<keyword id="KW-0272">Extracellular matrix</keyword>
<keyword id="KW-0325">Glycoprotein</keyword>
<keyword id="KW-0675">Receptor</keyword>
<keyword id="KW-1185">Reference proteome</keyword>
<keyword id="KW-0677">Repeat</keyword>
<keyword id="KW-0964">Secreted</keyword>
<keyword id="KW-0732">Signal</keyword>
<protein>
    <recommendedName>
        <fullName>Retinol-binding protein 3</fullName>
    </recommendedName>
    <alternativeName>
        <fullName>Interphotoreceptor retinoid-binding protein</fullName>
        <shortName>IRBP</shortName>
        <shortName>xIRBP</shortName>
    </alternativeName>
    <alternativeName>
        <fullName>Interstitial retinol-binding protein</fullName>
    </alternativeName>
</protein>
<dbReference type="EMBL" id="X95473">
    <property type="protein sequence ID" value="CAA64745.1"/>
    <property type="molecule type" value="mRNA"/>
</dbReference>
<dbReference type="EMBL" id="BC092153">
    <property type="protein sequence ID" value="AAH92153.1"/>
    <property type="molecule type" value="mRNA"/>
</dbReference>
<dbReference type="EMBL" id="BC106609">
    <property type="protein sequence ID" value="AAI06610.1"/>
    <property type="molecule type" value="mRNA"/>
</dbReference>
<dbReference type="EMBL" id="BC126046">
    <property type="protein sequence ID" value="AAI26047.1"/>
    <property type="molecule type" value="mRNA"/>
</dbReference>
<dbReference type="EMBL" id="BC166054">
    <property type="protein sequence ID" value="AAI66054.1"/>
    <property type="molecule type" value="mRNA"/>
</dbReference>
<dbReference type="EMBL" id="X69469">
    <property type="protein sequence ID" value="CAA49228.1"/>
    <property type="molecule type" value="Genomic_DNA"/>
</dbReference>
<dbReference type="PIR" id="S33927">
    <property type="entry name" value="S33927"/>
</dbReference>
<dbReference type="RefSeq" id="NP_001082637.1">
    <property type="nucleotide sequence ID" value="NM_001089168.2"/>
</dbReference>
<dbReference type="PDB" id="1J7X">
    <property type="method" value="X-ray"/>
    <property type="resolution" value="1.80 A"/>
    <property type="chains" value="A=319-615"/>
</dbReference>
<dbReference type="PDBsum" id="1J7X"/>
<dbReference type="SMR" id="Q7SZI7"/>
<dbReference type="MEROPS" id="S41.951"/>
<dbReference type="GlyCosmos" id="Q7SZI7">
    <property type="glycosylation" value="4 sites, No reported glycans"/>
</dbReference>
<dbReference type="GeneID" id="398616"/>
<dbReference type="KEGG" id="xla:398616"/>
<dbReference type="AGR" id="Xenbase:XB-GENE-1008802"/>
<dbReference type="CTD" id="398616"/>
<dbReference type="Xenbase" id="XB-GENE-1008802">
    <property type="gene designation" value="rbp3.L"/>
</dbReference>
<dbReference type="OrthoDB" id="10268064at2759"/>
<dbReference type="EvolutionaryTrace" id="Q7SZI7"/>
<dbReference type="Proteomes" id="UP000186698">
    <property type="component" value="Chromosome 7L"/>
</dbReference>
<dbReference type="Bgee" id="398616">
    <property type="expression patterns" value="Expressed in camera-type eye and 2 other cell types or tissues"/>
</dbReference>
<dbReference type="GO" id="GO:0090658">
    <property type="term" value="C:cone matrix sheath"/>
    <property type="evidence" value="ECO:0000318"/>
    <property type="project" value="GO_Central"/>
</dbReference>
<dbReference type="GO" id="GO:0005737">
    <property type="term" value="C:cytoplasm"/>
    <property type="evidence" value="ECO:0007669"/>
    <property type="project" value="UniProtKB-SubCell"/>
</dbReference>
<dbReference type="GO" id="GO:0005576">
    <property type="term" value="C:extracellular region"/>
    <property type="evidence" value="ECO:0007669"/>
    <property type="project" value="UniProtKB-KW"/>
</dbReference>
<dbReference type="GO" id="GO:0019841">
    <property type="term" value="F:retinol binding"/>
    <property type="evidence" value="ECO:0000318"/>
    <property type="project" value="GO_Central"/>
</dbReference>
<dbReference type="GO" id="GO:0008236">
    <property type="term" value="F:serine-type peptidase activity"/>
    <property type="evidence" value="ECO:0007669"/>
    <property type="project" value="InterPro"/>
</dbReference>
<dbReference type="GO" id="GO:0006508">
    <property type="term" value="P:proteolysis"/>
    <property type="evidence" value="ECO:0007669"/>
    <property type="project" value="InterPro"/>
</dbReference>
<dbReference type="CDD" id="cd07563">
    <property type="entry name" value="Peptidase_S41_IRBP"/>
    <property type="match status" value="4"/>
</dbReference>
<dbReference type="FunFam" id="3.90.226.10:FF:000038">
    <property type="entry name" value="Retinol-binding protein 3"/>
    <property type="match status" value="1"/>
</dbReference>
<dbReference type="Gene3D" id="3.30.750.44">
    <property type="match status" value="4"/>
</dbReference>
<dbReference type="Gene3D" id="3.90.226.10">
    <property type="entry name" value="2-enoyl-CoA Hydratase, Chain A, domain 1"/>
    <property type="match status" value="4"/>
</dbReference>
<dbReference type="InterPro" id="IPR029045">
    <property type="entry name" value="ClpP/crotonase-like_dom_sf"/>
</dbReference>
<dbReference type="InterPro" id="IPR005151">
    <property type="entry name" value="Tail-specific_protease"/>
</dbReference>
<dbReference type="PANTHER" id="PTHR11261">
    <property type="entry name" value="INTERPHOTORECEPTOR RETINOID-BINDING PROTEIN"/>
    <property type="match status" value="1"/>
</dbReference>
<dbReference type="PANTHER" id="PTHR11261:SF3">
    <property type="entry name" value="RETINOL-BINDING PROTEIN 3"/>
    <property type="match status" value="1"/>
</dbReference>
<dbReference type="Pfam" id="PF03572">
    <property type="entry name" value="Peptidase_S41"/>
    <property type="match status" value="4"/>
</dbReference>
<dbReference type="Pfam" id="PF11918">
    <property type="entry name" value="Peptidase_S41_N"/>
    <property type="match status" value="4"/>
</dbReference>
<dbReference type="SMART" id="SM00245">
    <property type="entry name" value="TSPc"/>
    <property type="match status" value="4"/>
</dbReference>
<dbReference type="SUPFAM" id="SSF52096">
    <property type="entry name" value="ClpP/crotonase"/>
    <property type="match status" value="4"/>
</dbReference>
<comment type="function">
    <text>IRBP shuttles 11-cis and all trans retinoids between the retinol isomerase in the pigment epithelium and the visual pigments in the photoreceptor cells of the retina. Also involved in the transport of fatty acids and retinal development.</text>
</comment>
<comment type="subunit">
    <text evidence="2 3">Monomer. Interacts with retinol. Predominantly found as a monomer, but to a really lower extent also found as a homodimer.</text>
</comment>
<comment type="subcellular location">
    <subcellularLocation>
        <location>Secreted</location>
        <location>Extracellular space</location>
        <location>Extracellular matrix</location>
        <location>Interphotoreceptor matrix</location>
    </subcellularLocation>
    <subcellularLocation>
        <location>Cytoplasm</location>
    </subcellularLocation>
    <text>Interphotoreceptor matrix that permeates the space between the retina and the contiguous layer of pigment epithelium cells. Lesser amounts found in the pigment epithelial cytoplasm.</text>
</comment>
<comment type="tissue specificity">
    <text evidence="4 5">Expressed in retina; at similar levels by both cones and rods. Weakly expressed in brain. In embryos, expression is restricted to the central retina.</text>
</comment>
<comment type="developmental stage">
    <text evidence="4 5">Expressed in retina at stage 42. In swimming tadpole, expression begins from stage 40, is clearly visible at stage 43 and increased markedly by stage 45/46. Expression appears to be restricted to the head.</text>
</comment>
<comment type="PTM">
    <text evidence="7">Glycosylated.</text>
</comment>
<comment type="similarity">
    <text evidence="6">Belongs to the peptidase S41A family.</text>
</comment>
<evidence type="ECO:0000255" key="1"/>
<evidence type="ECO:0000269" key="2">
    <source>
    </source>
</evidence>
<evidence type="ECO:0000269" key="3">
    <source>
    </source>
</evidence>
<evidence type="ECO:0000269" key="4">
    <source>
    </source>
</evidence>
<evidence type="ECO:0000269" key="5">
    <source>
    </source>
</evidence>
<evidence type="ECO:0000305" key="6"/>
<evidence type="ECO:0000305" key="7">
    <source>
    </source>
</evidence>
<evidence type="ECO:0007829" key="8">
    <source>
        <dbReference type="PDB" id="1J7X"/>
    </source>
</evidence>
<proteinExistence type="evidence at protein level"/>
<gene>
    <name type="primary">rbp3</name>
</gene>
<name>RET3_XENLA</name>
<sequence>MPPLFQALTTALFFCGIASNPLFQPSLVMDMAKVLLDNYCFPENLVGMQETIEQAVKGGEILHISDPDTLANVFTSGVQGYLNDPRLVVSYEPNYSGPQTEQSLELTPEQLKFLINHSVKYDILPGNIGYLRIDFIIGQDVVQKVGPHLVNNIWKKLMPTSALILDLRYSTQGEVSGIPFVVSYLCDSEIHIDSIYNRPSNTTTDLWTLPELMGERYGKVKDVVVLTSKYTKGVAEDASYILKHMNRAIVVGEKTAGGSLDTQKIKIGQSDFYITVPVSRSLSPLTGQSWEVSGVSPCVVVNAKDALDKAQAILAVRSSVTHVLHQLCDILANNYAFSERIPTLLQHLPNLDYSTVISEEDIAAKLNYELQSLTEDPRLVLKSKTDTLVMPGDSIQAENIPEDEAMLQALVNTVFKVSILPGNIGYLRFDQFADVSVIAKLAPFIVNTVWEPITITENLIIDLRYNVGGSSTAVPLLLSYFLDPETKIHLFTLHNRQQNSTDEVYSHPKVLGKPYGSKKGVYVLTSHQTATAAEEFAYLMQSLSRATIIGEITSGNLMHSKVFPFDGTQLSVTVPIINFIDSNGDYWLGGGVVPDAIVLADEALDKAKEIIAFHPSIFPLVKGTGHLLEVHYAIPEVAYKVSSVLQNKWSEGGYRSVVDLESLASLLTSEMQENSGDHRLHVFYSDTEPEILEDQPPKIPSPEELNYIIDALFKIEVLPGNVGYLRFDMMADTEIIKAIGPQLVSLVWNKLVETNSLIIDMRYNTGGYSTAIPIFCSYFFDPEPLQHLYTVYDRSTSTGKDIWTLPEVFGERYGSTKDIYILTSHMTGSAAEVFTRSLKDLNRATLIGEPTSGVSLSVGMYKVGDSNLYVTIPNQVVISSVTGKVWSVSGVEPHVIIQANEAMNIAHRIIKLRTKIPTVIQTAAKLVADNYAFADTGANVASKFIALVDKIDYKMIKSEVELAEKINDDLQSLSKDFHLKAVYIPENSKDRIPGVVPMQIPSPELFEELIKFSFHTDVFEKNIGYIRFDMFADSDLLNQVSDLLVEHVWKKVVDQDALIIDMRFNIGGPTSSIPIFCSYFFDEGTPVLLDKIYSRTSNAMTDIWTLPDLVGKTFGSKKPLIILTSSLTEGAAEEFVYIMKRLGRAYVVGEVTSGGCHPPQTYHVDDTHLYLTIPTSRSASAEPGESWEGKGVLPDLEISSETALLKAKEILESQLEGRR</sequence>
<reference key="1">
    <citation type="journal article" date="2007" name="BMC Biochem.">
        <title>Module structure of interphotoreceptor retinoid-binding protein (IRBP) may provide bases for its complex role in the visual cycle -structure/function study of Xenopus IRBP.</title>
        <authorList>
            <person name="Gonzalez-Fernandez F."/>
            <person name="Baer C.A."/>
            <person name="Ghosh D."/>
        </authorList>
    </citation>
    <scope>NUCLEOTIDE SEQUENCE [MRNA]</scope>
    <scope>IDENTIFICATION BY MASS SPECTROMETRY</scope>
    <source>
        <tissue>Tadpole</tissue>
    </source>
</reference>
<reference key="2">
    <citation type="journal article" date="2007" name="Mol. Vis.">
        <title>Purification of the full-length Xenopus interphotoreceptor retinoid binding protein and growth of diffraction-quality crystals.</title>
        <authorList>
            <person name="Ghosh D."/>
            <person name="Griswold J.B."/>
            <person name="Bevilacqua T."/>
            <person name="Gonzalez-Fernandez F."/>
        </authorList>
    </citation>
    <scope>PROTEIN SEQUENCE OF 23-27</scope>
    <scope>CRYSTALLIZATION</scope>
    <scope>INTERACTION WITH RETINOL</scope>
</reference>
<reference key="3">
    <citation type="submission" date="2008-04" db="EMBL/GenBank/DDBJ databases">
        <authorList>
            <consortium name="NIH - Xenopus Gene Collection (XGC) project"/>
        </authorList>
    </citation>
    <scope>NUCLEOTIDE SEQUENCE [LARGE SCALE MRNA] OF 897-1219</scope>
    <source>
        <tissue>Brain</tissue>
    </source>
</reference>
<reference key="4">
    <citation type="journal article" date="1993" name="J. Cell Sci.">
        <title>Interphotoreceptor retinoid-binding protein (IRBP), a major 124 kDa glycoprotein in the interphotoreceptor matrix of Xenopus laevis. Characterization, molecular cloning and biosynthesis.</title>
        <authorList>
            <person name="Gonzalez-Fernandez F."/>
            <person name="Kittredge K.L."/>
            <person name="Rayborn M.E."/>
            <person name="Hollyfield J.G."/>
            <person name="Landers R.A."/>
            <person name="Saha M."/>
            <person name="Grainger R.M."/>
        </authorList>
    </citation>
    <scope>NUCLEOTIDE SEQUENCE [GENOMIC DNA] OF 923-1219</scope>
    <scope>SUBCELLULAR LOCATION</scope>
    <scope>TISSUE SPECIFICITY</scope>
    <scope>GLYCOSYLATION</scope>
    <scope>DEVELOPMENTAL STAGE</scope>
    <source>
        <tissue>Tadpole</tissue>
    </source>
</reference>
<reference key="5">
    <citation type="journal article" date="1996" name="J. Comp. Neurol.">
        <title>Interphotoreceptor retinoid-binding protein (IRBP): expression in the adult and developing Xenopus retina.</title>
        <authorList>
            <person name="Hessler R.B."/>
            <person name="Baer C.A."/>
            <person name="Bukelman A."/>
            <person name="Kittredge K.L."/>
            <person name="Gonzalez-Fernandez F."/>
        </authorList>
    </citation>
    <scope>TISSUE SPECIFICITY</scope>
    <scope>SUBCELLULAR LOCATION</scope>
    <scope>DEVELOPMENTAL STAGE</scope>
</reference>
<reference key="6">
    <citation type="journal article" date="2001" name="Exp. Eye Res.">
        <title>The functional unit of interphotoreceptor retinoid-binding protein (IRBP) -- purification, characterization and preliminary crystallographic analysis.</title>
        <authorList>
            <person name="Loew A."/>
            <person name="Baer C."/>
            <person name="Gonzalez-Fernandez F."/>
        </authorList>
    </citation>
    <scope>CRYSTALLIZATION</scope>
</reference>
<reference key="7">
    <citation type="journal article" date="2003" name="J. Comp. Neurol.">
        <title>Internalization of interphotoreceptor retinoid-binding protein by the Xenopus retinal pigment epithelium.</title>
        <authorList>
            <person name="Cunningham L.L."/>
            <person name="Gonzalez-Fernandez F."/>
        </authorList>
    </citation>
    <scope>SUBCELLULAR LOCATION</scope>
</reference>
<reference key="8">
    <citation type="journal article" date="2002" name="Structure">
        <title>Crystal structure of the functional unit of interphotoreceptor retinoid binding protein.</title>
        <authorList>
            <person name="Loew A."/>
            <person name="Gonzalez-Fernandez F."/>
        </authorList>
    </citation>
    <scope>X-RAY CRYSTALLOGRAPHY (1.8 ANGSTROMS) OF 319-615</scope>
    <scope>SUBUNIT</scope>
</reference>